<proteinExistence type="inferred from homology"/>
<keyword id="KW-0150">Chloroplast</keyword>
<keyword id="KW-0472">Membrane</keyword>
<keyword id="KW-0520">NAD</keyword>
<keyword id="KW-0521">NADP</keyword>
<keyword id="KW-0934">Plastid</keyword>
<keyword id="KW-0618">Plastoquinone</keyword>
<keyword id="KW-0874">Quinone</keyword>
<keyword id="KW-0793">Thylakoid</keyword>
<keyword id="KW-1278">Translocase</keyword>
<keyword id="KW-0813">Transport</keyword>
<comment type="function">
    <text evidence="1">NDH shuttles electrons from NAD(P)H:plastoquinone, via FMN and iron-sulfur (Fe-S) centers, to quinones in the photosynthetic chain and possibly in a chloroplast respiratory chain. The immediate electron acceptor for the enzyme in this species is believed to be plastoquinone. Couples the redox reaction to proton translocation, and thus conserves the redox energy in a proton gradient.</text>
</comment>
<comment type="catalytic activity">
    <reaction evidence="1">
        <text>a plastoquinone + NADH + (n+1) H(+)(in) = a plastoquinol + NAD(+) + n H(+)(out)</text>
        <dbReference type="Rhea" id="RHEA:42608"/>
        <dbReference type="Rhea" id="RHEA-COMP:9561"/>
        <dbReference type="Rhea" id="RHEA-COMP:9562"/>
        <dbReference type="ChEBI" id="CHEBI:15378"/>
        <dbReference type="ChEBI" id="CHEBI:17757"/>
        <dbReference type="ChEBI" id="CHEBI:57540"/>
        <dbReference type="ChEBI" id="CHEBI:57945"/>
        <dbReference type="ChEBI" id="CHEBI:62192"/>
    </reaction>
</comment>
<comment type="catalytic activity">
    <reaction evidence="1">
        <text>a plastoquinone + NADPH + (n+1) H(+)(in) = a plastoquinol + NADP(+) + n H(+)(out)</text>
        <dbReference type="Rhea" id="RHEA:42612"/>
        <dbReference type="Rhea" id="RHEA-COMP:9561"/>
        <dbReference type="Rhea" id="RHEA-COMP:9562"/>
        <dbReference type="ChEBI" id="CHEBI:15378"/>
        <dbReference type="ChEBI" id="CHEBI:17757"/>
        <dbReference type="ChEBI" id="CHEBI:57783"/>
        <dbReference type="ChEBI" id="CHEBI:58349"/>
        <dbReference type="ChEBI" id="CHEBI:62192"/>
    </reaction>
</comment>
<comment type="subunit">
    <text evidence="1">NDH is composed of at least 16 different subunits, 5 of which are encoded in the nucleus.</text>
</comment>
<comment type="subcellular location">
    <subcellularLocation>
        <location evidence="1">Plastid</location>
        <location evidence="1">Chloroplast thylakoid membrane</location>
        <topology evidence="1">Peripheral membrane protein</topology>
        <orientation evidence="1">Stromal side</orientation>
    </subcellularLocation>
</comment>
<comment type="similarity">
    <text evidence="1">Belongs to the complex I 49 kDa subunit family.</text>
</comment>
<feature type="chain" id="PRO_0000358007" description="NAD(P)H-quinone oxidoreductase subunit H, chloroplastic">
    <location>
        <begin position="1"/>
        <end position="393"/>
    </location>
</feature>
<sequence>MKRPVTGKDLMIVNMGPHHPSMHGVLRLIVTLDGEDVVDCEPILGYLHRGMEKIAENRAIIQYLPYVTRWDYLATMFTEAITVNGPEQLGNIQVPKRASYIRVIMLELSRIASHLLWLGPFMADIGAQTPFFYIFREREFVYDLFEAATGMRMMHNFFRIGGIAADLPYGWIDKCLDFCDYFLTEVVEYQKLITRNPIFLERVEGVGIIGGEEAINWGLSGPMLRASGIPWDLRKVDRYESYDEFEWEIQWQKQGDSLARYLVRLSEMTESIKIIQQALEGLPGGPYENLESRGFDRKRNPEWNDFEYRFISKKPSPTFELSKQELYVRVEAPKGELGIFLIGDQSGFPWRWKIRPPGFINLQILPELVKRMKLADIMTILGSIDIIMGEVDR</sequence>
<organism>
    <name type="scientific">Nasturtium officinale</name>
    <name type="common">Watercress</name>
    <name type="synonym">Rorippa nasturtium-aquaticum</name>
    <dbReference type="NCBI Taxonomy" id="65948"/>
    <lineage>
        <taxon>Eukaryota</taxon>
        <taxon>Viridiplantae</taxon>
        <taxon>Streptophyta</taxon>
        <taxon>Embryophyta</taxon>
        <taxon>Tracheophyta</taxon>
        <taxon>Spermatophyta</taxon>
        <taxon>Magnoliopsida</taxon>
        <taxon>eudicotyledons</taxon>
        <taxon>Gunneridae</taxon>
        <taxon>Pentapetalae</taxon>
        <taxon>rosids</taxon>
        <taxon>malvids</taxon>
        <taxon>Brassicales</taxon>
        <taxon>Brassicaceae</taxon>
        <taxon>Cardamineae</taxon>
        <taxon>Nasturtium</taxon>
    </lineage>
</organism>
<protein>
    <recommendedName>
        <fullName evidence="1">NAD(P)H-quinone oxidoreductase subunit H, chloroplastic</fullName>
        <ecNumber evidence="1">7.1.1.-</ecNumber>
    </recommendedName>
    <alternativeName>
        <fullName>NAD(P)H dehydrogenase subunit H</fullName>
    </alternativeName>
    <alternativeName>
        <fullName evidence="1">NADH-plastoquinone oxidoreductase 49 kDa subunit</fullName>
    </alternativeName>
    <alternativeName>
        <fullName evidence="1">NADH-plastoquinone oxidoreductase subunit H</fullName>
    </alternativeName>
</protein>
<accession>A4QLZ1</accession>
<reference key="1">
    <citation type="submission" date="2007-03" db="EMBL/GenBank/DDBJ databases">
        <title>Sequencing analysis of Nasturtium officinale chloroplast DNA.</title>
        <authorList>
            <person name="Hosouchi T."/>
            <person name="Tsuruoka H."/>
            <person name="Kotani H."/>
        </authorList>
    </citation>
    <scope>NUCLEOTIDE SEQUENCE [LARGE SCALE GENOMIC DNA]</scope>
</reference>
<name>NDHH_NASOF</name>
<evidence type="ECO:0000255" key="1">
    <source>
        <dbReference type="HAMAP-Rule" id="MF_01358"/>
    </source>
</evidence>
<gene>
    <name evidence="1" type="primary">ndhH</name>
</gene>
<geneLocation type="chloroplast"/>
<dbReference type="EC" id="7.1.1.-" evidence="1"/>
<dbReference type="EMBL" id="AP009376">
    <property type="protein sequence ID" value="BAF50696.1"/>
    <property type="molecule type" value="Genomic_DNA"/>
</dbReference>
<dbReference type="RefSeq" id="YP_001123871.1">
    <property type="nucleotide sequence ID" value="NC_009275.1"/>
</dbReference>
<dbReference type="SMR" id="A4QLZ1"/>
<dbReference type="GeneID" id="4962127"/>
<dbReference type="GO" id="GO:0009535">
    <property type="term" value="C:chloroplast thylakoid membrane"/>
    <property type="evidence" value="ECO:0007669"/>
    <property type="project" value="UniProtKB-SubCell"/>
</dbReference>
<dbReference type="GO" id="GO:0051287">
    <property type="term" value="F:NAD binding"/>
    <property type="evidence" value="ECO:0007669"/>
    <property type="project" value="InterPro"/>
</dbReference>
<dbReference type="GO" id="GO:0016655">
    <property type="term" value="F:oxidoreductase activity, acting on NAD(P)H, quinone or similar compound as acceptor"/>
    <property type="evidence" value="ECO:0007669"/>
    <property type="project" value="UniProtKB-UniRule"/>
</dbReference>
<dbReference type="GO" id="GO:0048038">
    <property type="term" value="F:quinone binding"/>
    <property type="evidence" value="ECO:0007669"/>
    <property type="project" value="UniProtKB-KW"/>
</dbReference>
<dbReference type="GO" id="GO:0019684">
    <property type="term" value="P:photosynthesis, light reaction"/>
    <property type="evidence" value="ECO:0007669"/>
    <property type="project" value="UniProtKB-UniRule"/>
</dbReference>
<dbReference type="FunFam" id="1.10.645.10:FF:000003">
    <property type="entry name" value="NAD(P)H-quinone oxidoreductase subunit H, chloroplastic"/>
    <property type="match status" value="1"/>
</dbReference>
<dbReference type="Gene3D" id="1.10.645.10">
    <property type="entry name" value="Cytochrome-c3 Hydrogenase, chain B"/>
    <property type="match status" value="1"/>
</dbReference>
<dbReference type="HAMAP" id="MF_01358">
    <property type="entry name" value="NDH1_NuoD"/>
    <property type="match status" value="1"/>
</dbReference>
<dbReference type="InterPro" id="IPR001135">
    <property type="entry name" value="NADH_Q_OxRdtase_suD"/>
</dbReference>
<dbReference type="InterPro" id="IPR014029">
    <property type="entry name" value="NADH_UbQ_OxRdtase_49kDa_CS"/>
</dbReference>
<dbReference type="InterPro" id="IPR022885">
    <property type="entry name" value="NDH1_su_D/H"/>
</dbReference>
<dbReference type="InterPro" id="IPR029014">
    <property type="entry name" value="NiFe-Hase_large"/>
</dbReference>
<dbReference type="NCBIfam" id="NF004739">
    <property type="entry name" value="PRK06075.1"/>
    <property type="match status" value="1"/>
</dbReference>
<dbReference type="NCBIfam" id="NF005649">
    <property type="entry name" value="PRK07415.1"/>
    <property type="match status" value="1"/>
</dbReference>
<dbReference type="PANTHER" id="PTHR11993:SF10">
    <property type="entry name" value="NADH DEHYDROGENASE [UBIQUINONE] IRON-SULFUR PROTEIN 2, MITOCHONDRIAL"/>
    <property type="match status" value="1"/>
</dbReference>
<dbReference type="PANTHER" id="PTHR11993">
    <property type="entry name" value="NADH-UBIQUINONE OXIDOREDUCTASE 49 KDA SUBUNIT"/>
    <property type="match status" value="1"/>
</dbReference>
<dbReference type="Pfam" id="PF00346">
    <property type="entry name" value="Complex1_49kDa"/>
    <property type="match status" value="1"/>
</dbReference>
<dbReference type="SUPFAM" id="SSF56762">
    <property type="entry name" value="HydB/Nqo4-like"/>
    <property type="match status" value="1"/>
</dbReference>
<dbReference type="PROSITE" id="PS00535">
    <property type="entry name" value="COMPLEX1_49K"/>
    <property type="match status" value="1"/>
</dbReference>